<evidence type="ECO:0000255" key="1">
    <source>
        <dbReference type="HAMAP-Rule" id="MF_00340"/>
    </source>
</evidence>
<evidence type="ECO:0000305" key="2"/>
<protein>
    <recommendedName>
        <fullName evidence="1">Large ribosomal subunit protein bL32</fullName>
    </recommendedName>
    <alternativeName>
        <fullName evidence="2">50S ribosomal protein L32</fullName>
    </alternativeName>
</protein>
<dbReference type="EMBL" id="CP000387">
    <property type="protein sequence ID" value="ABN45648.1"/>
    <property type="molecule type" value="Genomic_DNA"/>
</dbReference>
<dbReference type="RefSeq" id="WP_002894148.1">
    <property type="nucleotide sequence ID" value="NZ_CAXTYR010000005.1"/>
</dbReference>
<dbReference type="RefSeq" id="YP_001036198.1">
    <property type="nucleotide sequence ID" value="NC_009009.1"/>
</dbReference>
<dbReference type="SMR" id="A3CR43"/>
<dbReference type="STRING" id="388919.SSA_2287"/>
<dbReference type="GeneID" id="48426619"/>
<dbReference type="KEGG" id="ssa:SSA_2287"/>
<dbReference type="PATRIC" id="fig|388919.9.peg.2170"/>
<dbReference type="eggNOG" id="COG0333">
    <property type="taxonomic scope" value="Bacteria"/>
</dbReference>
<dbReference type="HOGENOM" id="CLU_129084_2_3_9"/>
<dbReference type="OrthoDB" id="9812874at2"/>
<dbReference type="Proteomes" id="UP000002148">
    <property type="component" value="Chromosome"/>
</dbReference>
<dbReference type="GO" id="GO:0015934">
    <property type="term" value="C:large ribosomal subunit"/>
    <property type="evidence" value="ECO:0007669"/>
    <property type="project" value="InterPro"/>
</dbReference>
<dbReference type="GO" id="GO:0003735">
    <property type="term" value="F:structural constituent of ribosome"/>
    <property type="evidence" value="ECO:0007669"/>
    <property type="project" value="InterPro"/>
</dbReference>
<dbReference type="GO" id="GO:0006412">
    <property type="term" value="P:translation"/>
    <property type="evidence" value="ECO:0007669"/>
    <property type="project" value="UniProtKB-UniRule"/>
</dbReference>
<dbReference type="HAMAP" id="MF_00340">
    <property type="entry name" value="Ribosomal_bL32"/>
    <property type="match status" value="1"/>
</dbReference>
<dbReference type="InterPro" id="IPR002677">
    <property type="entry name" value="Ribosomal_bL32"/>
</dbReference>
<dbReference type="InterPro" id="IPR044957">
    <property type="entry name" value="Ribosomal_bL32_bact"/>
</dbReference>
<dbReference type="InterPro" id="IPR011332">
    <property type="entry name" value="Ribosomal_zn-bd"/>
</dbReference>
<dbReference type="NCBIfam" id="TIGR01031">
    <property type="entry name" value="rpmF_bact"/>
    <property type="match status" value="1"/>
</dbReference>
<dbReference type="PANTHER" id="PTHR35534">
    <property type="entry name" value="50S RIBOSOMAL PROTEIN L32"/>
    <property type="match status" value="1"/>
</dbReference>
<dbReference type="PANTHER" id="PTHR35534:SF1">
    <property type="entry name" value="LARGE RIBOSOMAL SUBUNIT PROTEIN BL32"/>
    <property type="match status" value="1"/>
</dbReference>
<dbReference type="Pfam" id="PF01783">
    <property type="entry name" value="Ribosomal_L32p"/>
    <property type="match status" value="1"/>
</dbReference>
<dbReference type="SUPFAM" id="SSF57829">
    <property type="entry name" value="Zn-binding ribosomal proteins"/>
    <property type="match status" value="1"/>
</dbReference>
<organism>
    <name type="scientific">Streptococcus sanguinis (strain SK36)</name>
    <dbReference type="NCBI Taxonomy" id="388919"/>
    <lineage>
        <taxon>Bacteria</taxon>
        <taxon>Bacillati</taxon>
        <taxon>Bacillota</taxon>
        <taxon>Bacilli</taxon>
        <taxon>Lactobacillales</taxon>
        <taxon>Streptococcaceae</taxon>
        <taxon>Streptococcus</taxon>
    </lineage>
</organism>
<comment type="similarity">
    <text evidence="1">Belongs to the bacterial ribosomal protein bL32 family.</text>
</comment>
<gene>
    <name evidence="1" type="primary">rpmF</name>
    <name type="ordered locus">SSA_2287</name>
</gene>
<name>RL32_STRSV</name>
<accession>A3CR43</accession>
<keyword id="KW-1185">Reference proteome</keyword>
<keyword id="KW-0687">Ribonucleoprotein</keyword>
<keyword id="KW-0689">Ribosomal protein</keyword>
<feature type="chain" id="PRO_0000296579" description="Large ribosomal subunit protein bL32">
    <location>
        <begin position="1"/>
        <end position="60"/>
    </location>
</feature>
<reference key="1">
    <citation type="journal article" date="2007" name="J. Bacteriol.">
        <title>Genome of the opportunistic pathogen Streptococcus sanguinis.</title>
        <authorList>
            <person name="Xu P."/>
            <person name="Alves J.M."/>
            <person name="Kitten T."/>
            <person name="Brown A."/>
            <person name="Chen Z."/>
            <person name="Ozaki L.S."/>
            <person name="Manque P."/>
            <person name="Ge X."/>
            <person name="Serrano M.G."/>
            <person name="Puiu D."/>
            <person name="Hendricks S."/>
            <person name="Wang Y."/>
            <person name="Chaplin M.D."/>
            <person name="Akan D."/>
            <person name="Paik S."/>
            <person name="Peterson D.L."/>
            <person name="Macrina F.L."/>
            <person name="Buck G.A."/>
        </authorList>
    </citation>
    <scope>NUCLEOTIDE SEQUENCE [LARGE SCALE GENOMIC DNA]</scope>
    <source>
        <strain>SK36</strain>
    </source>
</reference>
<sequence length="60" mass="6757">MAVPARRTSKAKKNKRRTHYKVTAPTVTFDETTGDYSRSHRVSLKGYYKGRKIAKAAAAE</sequence>
<proteinExistence type="inferred from homology"/>